<proteinExistence type="evidence at protein level"/>
<organism>
    <name type="scientific">Ranoidea aurea</name>
    <name type="common">Green and golden bell frog</name>
    <name type="synonym">Litoria aurea</name>
    <dbReference type="NCBI Taxonomy" id="8371"/>
    <lineage>
        <taxon>Eukaryota</taxon>
        <taxon>Metazoa</taxon>
        <taxon>Chordata</taxon>
        <taxon>Craniata</taxon>
        <taxon>Vertebrata</taxon>
        <taxon>Euteleostomi</taxon>
        <taxon>Amphibia</taxon>
        <taxon>Batrachia</taxon>
        <taxon>Anura</taxon>
        <taxon>Neobatrachia</taxon>
        <taxon>Hyloidea</taxon>
        <taxon>Hylidae</taxon>
        <taxon>Pelodryadinae</taxon>
        <taxon>Ranoidea</taxon>
    </lineage>
</organism>
<dbReference type="GO" id="GO:0005576">
    <property type="term" value="C:extracellular region"/>
    <property type="evidence" value="ECO:0007669"/>
    <property type="project" value="UniProtKB-SubCell"/>
</dbReference>
<dbReference type="GO" id="GO:0006952">
    <property type="term" value="P:defense response"/>
    <property type="evidence" value="ECO:0007669"/>
    <property type="project" value="UniProtKB-KW"/>
</dbReference>
<name>AUR41_RANAE</name>
<reference key="1">
    <citation type="journal article" date="2000" name="Eur. J. Biochem.">
        <title>The antibiotic and anticancer active aurein peptides from the australian bell frogs Litoria aurea and Litoria raniformis the solution structure of aurein 1.2.</title>
        <authorList>
            <person name="Rozek T."/>
            <person name="Wegener K.L."/>
            <person name="Bowie J.H."/>
            <person name="Olver I.N."/>
            <person name="Carver J.A."/>
            <person name="Wallace J.C."/>
            <person name="Tyler M.J."/>
        </authorList>
    </citation>
    <scope>PROTEIN SEQUENCE</scope>
    <scope>FUNCTION</scope>
    <source>
        <tissue>Skin secretion</tissue>
    </source>
</reference>
<protein>
    <recommendedName>
        <fullName>Aurein-4.1</fullName>
    </recommendedName>
</protein>
<keyword id="KW-0878">Amphibian defense peptide</keyword>
<keyword id="KW-0903">Direct protein sequencing</keyword>
<keyword id="KW-0964">Secreted</keyword>
<sequence length="23" mass="2397">GLIQTIKEKLKELAGGLVTGIQS</sequence>
<evidence type="ECO:0000269" key="1">
    <source>
    </source>
</evidence>
<evidence type="ECO:0000305" key="2"/>
<accession>P82397</accession>
<feature type="peptide" id="PRO_0000043726" description="Aurein-4.1">
    <location>
        <begin position="1"/>
        <end position="23"/>
    </location>
</feature>
<comment type="function">
    <text evidence="1">Has no antimicrobial or anticancer activity.</text>
</comment>
<comment type="subcellular location">
    <subcellularLocation>
        <location>Secreted</location>
    </subcellularLocation>
</comment>
<comment type="tissue specificity">
    <text>Expressed by the skin dorsal glands.</text>
</comment>
<comment type="similarity">
    <text evidence="2">Belongs to the frog skin active peptide (FSAP) family. Aurein subfamily.</text>
</comment>